<protein>
    <recommendedName>
        <fullName>Purine nucleoside phosphorylase DR_1966</fullName>
        <ecNumber evidence="2">2.4.2.1</ecNumber>
    </recommendedName>
    <alternativeName>
        <fullName>Adenosine deaminase DR_1966</fullName>
        <ecNumber evidence="2">3.5.4.4</ecNumber>
    </alternativeName>
    <alternativeName>
        <fullName>S-methyl-5'-thioadenosine phosphorylase DR_1966</fullName>
        <ecNumber evidence="2">2.4.2.28</ecNumber>
    </alternativeName>
</protein>
<sequence length="253" mass="26492">MTAPGLPLLRAPNLAVPHAFTTRAGGVSAGPYAGLNLDDRSDDPRPVAENRARLAAALGFAADDFARLNQVHGVQVVHAQAPGFWEGDALVTATPGVLLAIGTADCYPLLLADPEAGVIGAAHAGWKGTVGRIGQRTVEQMVNLGARPERIHAAVGPGICGEQYEVGEDVAAQFRAAGLGEWVLEREGRTHLDLAGANRALLEGAGVGDLWVSGRCSTEADFYSYRRDAGQTGRMWAVIGLPRREGQTGEARA</sequence>
<organism>
    <name type="scientific">Deinococcus radiodurans (strain ATCC 13939 / DSM 20539 / JCM 16871 / CCUG 27074 / LMG 4051 / NBRC 15346 / NCIMB 9279 / VKM B-1422 / R1)</name>
    <dbReference type="NCBI Taxonomy" id="243230"/>
    <lineage>
        <taxon>Bacteria</taxon>
        <taxon>Thermotogati</taxon>
        <taxon>Deinococcota</taxon>
        <taxon>Deinococci</taxon>
        <taxon>Deinococcales</taxon>
        <taxon>Deinococcaceae</taxon>
        <taxon>Deinococcus</taxon>
    </lineage>
</organism>
<reference key="1">
    <citation type="journal article" date="1999" name="Science">
        <title>Genome sequence of the radioresistant bacterium Deinococcus radiodurans R1.</title>
        <authorList>
            <person name="White O."/>
            <person name="Eisen J.A."/>
            <person name="Heidelberg J.F."/>
            <person name="Hickey E.K."/>
            <person name="Peterson J.D."/>
            <person name="Dodson R.J."/>
            <person name="Haft D.H."/>
            <person name="Gwinn M.L."/>
            <person name="Nelson W.C."/>
            <person name="Richardson D.L."/>
            <person name="Moffat K.S."/>
            <person name="Qin H."/>
            <person name="Jiang L."/>
            <person name="Pamphile W."/>
            <person name="Crosby M."/>
            <person name="Shen M."/>
            <person name="Vamathevan J.J."/>
            <person name="Lam P."/>
            <person name="McDonald L.A."/>
            <person name="Utterback T.R."/>
            <person name="Zalewski C."/>
            <person name="Makarova K.S."/>
            <person name="Aravind L."/>
            <person name="Daly M.J."/>
            <person name="Minton K.W."/>
            <person name="Fleischmann R.D."/>
            <person name="Ketchum K.A."/>
            <person name="Nelson K.E."/>
            <person name="Salzberg S.L."/>
            <person name="Smith H.O."/>
            <person name="Venter J.C."/>
            <person name="Fraser C.M."/>
        </authorList>
    </citation>
    <scope>NUCLEOTIDE SEQUENCE [LARGE SCALE GENOMIC DNA]</scope>
    <source>
        <strain>ATCC 13939 / DSM 20539 / JCM 16871 / CCUG 27074 / LMG 4051 / NBRC 15346 / NCIMB 9279 / VKM B-1422 / R1</strain>
    </source>
</reference>
<comment type="function">
    <text evidence="2">Purine nucleoside enzyme that catalyzes the phosphorolysis of adenosine and inosine nucleosides, yielding D-ribose 1-phosphate and the respective free bases, adenine and hypoxanthine. Also catalyzes the phosphorolysis of S-methyl-5'-thioadenosine into adenine and S-methyl-5-thio-alpha-D-ribose 1-phosphate. Also has adenosine deaminase activity.</text>
</comment>
<comment type="catalytic activity">
    <reaction evidence="2">
        <text>adenosine + phosphate = alpha-D-ribose 1-phosphate + adenine</text>
        <dbReference type="Rhea" id="RHEA:27642"/>
        <dbReference type="ChEBI" id="CHEBI:16335"/>
        <dbReference type="ChEBI" id="CHEBI:16708"/>
        <dbReference type="ChEBI" id="CHEBI:43474"/>
        <dbReference type="ChEBI" id="CHEBI:57720"/>
        <dbReference type="EC" id="2.4.2.1"/>
    </reaction>
    <physiologicalReaction direction="left-to-right" evidence="2">
        <dbReference type="Rhea" id="RHEA:27643"/>
    </physiologicalReaction>
</comment>
<comment type="catalytic activity">
    <reaction evidence="2">
        <text>S-methyl-5'-thioadenosine + phosphate = 5-(methylsulfanyl)-alpha-D-ribose 1-phosphate + adenine</text>
        <dbReference type="Rhea" id="RHEA:11852"/>
        <dbReference type="ChEBI" id="CHEBI:16708"/>
        <dbReference type="ChEBI" id="CHEBI:17509"/>
        <dbReference type="ChEBI" id="CHEBI:43474"/>
        <dbReference type="ChEBI" id="CHEBI:58533"/>
        <dbReference type="EC" id="2.4.2.28"/>
    </reaction>
    <physiologicalReaction direction="left-to-right" evidence="2">
        <dbReference type="Rhea" id="RHEA:11853"/>
    </physiologicalReaction>
</comment>
<comment type="catalytic activity">
    <reaction evidence="2">
        <text>inosine + phosphate = alpha-D-ribose 1-phosphate + hypoxanthine</text>
        <dbReference type="Rhea" id="RHEA:27646"/>
        <dbReference type="ChEBI" id="CHEBI:17368"/>
        <dbReference type="ChEBI" id="CHEBI:17596"/>
        <dbReference type="ChEBI" id="CHEBI:43474"/>
        <dbReference type="ChEBI" id="CHEBI:57720"/>
        <dbReference type="EC" id="2.4.2.1"/>
    </reaction>
    <physiologicalReaction direction="left-to-right" evidence="2">
        <dbReference type="Rhea" id="RHEA:27647"/>
    </physiologicalReaction>
</comment>
<comment type="catalytic activity">
    <reaction evidence="2">
        <text>adenosine + H2O + H(+) = inosine + NH4(+)</text>
        <dbReference type="Rhea" id="RHEA:24408"/>
        <dbReference type="ChEBI" id="CHEBI:15377"/>
        <dbReference type="ChEBI" id="CHEBI:15378"/>
        <dbReference type="ChEBI" id="CHEBI:16335"/>
        <dbReference type="ChEBI" id="CHEBI:17596"/>
        <dbReference type="ChEBI" id="CHEBI:28938"/>
        <dbReference type="EC" id="3.5.4.4"/>
    </reaction>
    <physiologicalReaction direction="left-to-right" evidence="2">
        <dbReference type="Rhea" id="RHEA:24409"/>
    </physiologicalReaction>
</comment>
<comment type="cofactor">
    <cofactor evidence="1">
        <name>Cu(2+)</name>
        <dbReference type="ChEBI" id="CHEBI:29036"/>
    </cofactor>
    <cofactor evidence="2">
        <name>Zn(2+)</name>
        <dbReference type="ChEBI" id="CHEBI:29105"/>
    </cofactor>
</comment>
<comment type="subunit">
    <text evidence="3">Homodimer.</text>
</comment>
<comment type="similarity">
    <text evidence="4">Belongs to the purine nucleoside phosphorylase YfiH/LACC1 family.</text>
</comment>
<gene>
    <name type="ordered locus">DR_1966</name>
</gene>
<proteinExistence type="inferred from homology"/>
<dbReference type="EC" id="2.4.2.1" evidence="2"/>
<dbReference type="EC" id="3.5.4.4" evidence="2"/>
<dbReference type="EC" id="2.4.2.28" evidence="2"/>
<dbReference type="EMBL" id="AE000513">
    <property type="protein sequence ID" value="AAF11520.1"/>
    <property type="molecule type" value="Genomic_DNA"/>
</dbReference>
<dbReference type="PIR" id="G75330">
    <property type="entry name" value="G75330"/>
</dbReference>
<dbReference type="RefSeq" id="NP_295689.1">
    <property type="nucleotide sequence ID" value="NC_001263.1"/>
</dbReference>
<dbReference type="RefSeq" id="WP_010888599.1">
    <property type="nucleotide sequence ID" value="NC_001263.1"/>
</dbReference>
<dbReference type="SMR" id="Q9RT03"/>
<dbReference type="FunCoup" id="Q9RT03">
    <property type="interactions" value="197"/>
</dbReference>
<dbReference type="STRING" id="243230.DR_1966"/>
<dbReference type="PaxDb" id="243230-DR_1966"/>
<dbReference type="EnsemblBacteria" id="AAF11520">
    <property type="protein sequence ID" value="AAF11520"/>
    <property type="gene ID" value="DR_1966"/>
</dbReference>
<dbReference type="GeneID" id="69518202"/>
<dbReference type="KEGG" id="dra:DR_1966"/>
<dbReference type="PATRIC" id="fig|243230.17.peg.2187"/>
<dbReference type="eggNOG" id="COG1496">
    <property type="taxonomic scope" value="Bacteria"/>
</dbReference>
<dbReference type="HOGENOM" id="CLU_065784_2_0_0"/>
<dbReference type="InParanoid" id="Q9RT03"/>
<dbReference type="OrthoDB" id="4279at2"/>
<dbReference type="Proteomes" id="UP000002524">
    <property type="component" value="Chromosome 1"/>
</dbReference>
<dbReference type="GO" id="GO:0004000">
    <property type="term" value="F:adenosine deaminase activity"/>
    <property type="evidence" value="ECO:0007669"/>
    <property type="project" value="RHEA"/>
</dbReference>
<dbReference type="GO" id="GO:0005507">
    <property type="term" value="F:copper ion binding"/>
    <property type="evidence" value="ECO:0000318"/>
    <property type="project" value="GO_Central"/>
</dbReference>
<dbReference type="GO" id="GO:0016491">
    <property type="term" value="F:oxidoreductase activity"/>
    <property type="evidence" value="ECO:0007669"/>
    <property type="project" value="UniProtKB-KW"/>
</dbReference>
<dbReference type="GO" id="GO:0017061">
    <property type="term" value="F:S-methyl-5-thioadenosine phosphorylase activity"/>
    <property type="evidence" value="ECO:0007669"/>
    <property type="project" value="UniProtKB-EC"/>
</dbReference>
<dbReference type="CDD" id="cd16833">
    <property type="entry name" value="YfiH"/>
    <property type="match status" value="1"/>
</dbReference>
<dbReference type="Gene3D" id="3.60.140.10">
    <property type="entry name" value="CNF1/YfiH-like putative cysteine hydrolases"/>
    <property type="match status" value="1"/>
</dbReference>
<dbReference type="InterPro" id="IPR003730">
    <property type="entry name" value="Cu_polyphenol_OxRdtase"/>
</dbReference>
<dbReference type="InterPro" id="IPR038371">
    <property type="entry name" value="Cu_polyphenol_OxRdtase_sf"/>
</dbReference>
<dbReference type="InterPro" id="IPR011324">
    <property type="entry name" value="Cytotoxic_necrot_fac-like_cat"/>
</dbReference>
<dbReference type="NCBIfam" id="TIGR00726">
    <property type="entry name" value="peptidoglycan editing factor PgeF"/>
    <property type="match status" value="1"/>
</dbReference>
<dbReference type="PANTHER" id="PTHR30616:SF2">
    <property type="entry name" value="PURINE NUCLEOSIDE PHOSPHORYLASE LACC1"/>
    <property type="match status" value="1"/>
</dbReference>
<dbReference type="PANTHER" id="PTHR30616">
    <property type="entry name" value="UNCHARACTERIZED PROTEIN YFIH"/>
    <property type="match status" value="1"/>
</dbReference>
<dbReference type="Pfam" id="PF02578">
    <property type="entry name" value="Cu-oxidase_4"/>
    <property type="match status" value="1"/>
</dbReference>
<dbReference type="SUPFAM" id="SSF64438">
    <property type="entry name" value="CNF1/YfiH-like putative cysteine hydrolases"/>
    <property type="match status" value="1"/>
</dbReference>
<name>PURNU_DEIRA</name>
<feature type="chain" id="PRO_0000163162" description="Purine nucleoside phosphorylase DR_1966">
    <location>
        <begin position="1"/>
        <end position="253"/>
    </location>
</feature>
<feature type="binding site" evidence="2">
    <location>
        <position position="72"/>
    </location>
    <ligand>
        <name>Zn(2+)</name>
        <dbReference type="ChEBI" id="CHEBI:29105"/>
        <note>catalytic</note>
    </ligand>
</feature>
<feature type="binding site" evidence="2">
    <location>
        <position position="106"/>
    </location>
    <ligand>
        <name>Zn(2+)</name>
        <dbReference type="ChEBI" id="CHEBI:29105"/>
        <note>catalytic</note>
    </ligand>
</feature>
<feature type="binding site" evidence="2">
    <location>
        <position position="123"/>
    </location>
    <ligand>
        <name>Zn(2+)</name>
        <dbReference type="ChEBI" id="CHEBI:29105"/>
        <note>catalytic</note>
    </ligand>
</feature>
<keyword id="KW-0186">Copper</keyword>
<keyword id="KW-0378">Hydrolase</keyword>
<keyword id="KW-0479">Metal-binding</keyword>
<keyword id="KW-0560">Oxidoreductase</keyword>
<keyword id="KW-1185">Reference proteome</keyword>
<keyword id="KW-0808">Transferase</keyword>
<keyword id="KW-0862">Zinc</keyword>
<evidence type="ECO:0000250" key="1">
    <source>
        <dbReference type="UniProtKB" id="P33644"/>
    </source>
</evidence>
<evidence type="ECO:0000250" key="2">
    <source>
        <dbReference type="UniProtKB" id="P84138"/>
    </source>
</evidence>
<evidence type="ECO:0000250" key="3">
    <source>
        <dbReference type="UniProtKB" id="Q1EIR0"/>
    </source>
</evidence>
<evidence type="ECO:0000305" key="4"/>
<accession>Q9RT03</accession>